<name>RN146_RAT</name>
<sequence length="352" mass="38224">MAGCGEIDHSLNMLPTNKKASETCSNTAPSLTVPECAICLQTCVHPVSLPCKHVFCYLCVKGASWLGKRCALCRQEIPEDFLDKPTLLSPEELKAASRGNGEYVWYYEGRNGWWQYDERTSRELEDAFSKGKKNTEMLIAGFLYVADLENMVQYRRNEHGRRRKIKRDIIDIPKKGVAGLRLDCDSNTVNLARESSADGADSGSAHTGASVQLPVPSSTRPLTSVDGQLTSPVTPSPDAGASLEDSFAHLQLSGDSIAERSHRGEGEEDHESPSSGRVPDTSTEETESDASSDIEDAPVVVAQHSLTQQRLLVSSANQTVAERSDRPVAGGGTMSVNVRSRRPDGQCTVTEV</sequence>
<dbReference type="EC" id="2.3.2.27"/>
<dbReference type="EMBL" id="BC083675">
    <property type="protein sequence ID" value="AAH83675.1"/>
    <property type="molecule type" value="mRNA"/>
</dbReference>
<dbReference type="RefSeq" id="NP_001012060.2">
    <property type="nucleotide sequence ID" value="NM_001012060.2"/>
</dbReference>
<dbReference type="BMRB" id="Q5XIK5"/>
<dbReference type="SMR" id="Q5XIK5"/>
<dbReference type="BioGRID" id="258888">
    <property type="interactions" value="1"/>
</dbReference>
<dbReference type="FunCoup" id="Q5XIK5">
    <property type="interactions" value="1631"/>
</dbReference>
<dbReference type="STRING" id="10116.ENSRNOP00000015421"/>
<dbReference type="GlyGen" id="Q5XIK5">
    <property type="glycosylation" value="1 site"/>
</dbReference>
<dbReference type="iPTMnet" id="Q5XIK5"/>
<dbReference type="PhosphoSitePlus" id="Q5XIK5"/>
<dbReference type="PaxDb" id="10116-ENSRNOP00000015421"/>
<dbReference type="ABCD" id="Q5XIK5">
    <property type="antibodies" value="1 sequenced antibody"/>
</dbReference>
<dbReference type="Ensembl" id="ENSRNOT00000110925.1">
    <property type="protein sequence ID" value="ENSRNOP00000094151.1"/>
    <property type="gene ID" value="ENSRNOG00000011588.7"/>
</dbReference>
<dbReference type="Ensembl" id="ENSRNOT00000119984.1">
    <property type="protein sequence ID" value="ENSRNOP00000081042.1"/>
    <property type="gene ID" value="ENSRNOG00000011588.7"/>
</dbReference>
<dbReference type="GeneID" id="308051"/>
<dbReference type="KEGG" id="rno:308051"/>
<dbReference type="UCSC" id="RGD:1306482">
    <property type="organism name" value="rat"/>
</dbReference>
<dbReference type="AGR" id="RGD:1306482"/>
<dbReference type="CTD" id="81847"/>
<dbReference type="RGD" id="1306482">
    <property type="gene designation" value="Rnf146"/>
</dbReference>
<dbReference type="eggNOG" id="KOG0824">
    <property type="taxonomic scope" value="Eukaryota"/>
</dbReference>
<dbReference type="GeneTree" id="ENSGT00390000000358"/>
<dbReference type="HOGENOM" id="CLU_067425_0_0_1"/>
<dbReference type="InParanoid" id="Q5XIK5"/>
<dbReference type="OrthoDB" id="10065815at2759"/>
<dbReference type="PhylomeDB" id="Q5XIK5"/>
<dbReference type="Reactome" id="R-RNO-201681">
    <property type="pathway name" value="TCF dependent signaling in response to WNT"/>
</dbReference>
<dbReference type="Reactome" id="R-RNO-4641257">
    <property type="pathway name" value="Degradation of AXIN"/>
</dbReference>
<dbReference type="Reactome" id="R-RNO-5689880">
    <property type="pathway name" value="Ub-specific processing proteases"/>
</dbReference>
<dbReference type="Reactome" id="R-RNO-8948751">
    <property type="pathway name" value="Regulation of PTEN stability and activity"/>
</dbReference>
<dbReference type="UniPathway" id="UPA00143"/>
<dbReference type="PRO" id="PR:Q5XIK5"/>
<dbReference type="Proteomes" id="UP000002494">
    <property type="component" value="Chromosome 1"/>
</dbReference>
<dbReference type="GO" id="GO:0005737">
    <property type="term" value="C:cytoplasm"/>
    <property type="evidence" value="ECO:0000318"/>
    <property type="project" value="GO_Central"/>
</dbReference>
<dbReference type="GO" id="GO:0005829">
    <property type="term" value="C:cytosol"/>
    <property type="evidence" value="ECO:0000250"/>
    <property type="project" value="UniProtKB"/>
</dbReference>
<dbReference type="GO" id="GO:0005634">
    <property type="term" value="C:nucleus"/>
    <property type="evidence" value="ECO:0000318"/>
    <property type="project" value="GO_Central"/>
</dbReference>
<dbReference type="GO" id="GO:0019899">
    <property type="term" value="F:enzyme binding"/>
    <property type="evidence" value="ECO:0000353"/>
    <property type="project" value="RGD"/>
</dbReference>
<dbReference type="GO" id="GO:0072572">
    <property type="term" value="F:poly-ADP-D-ribose binding"/>
    <property type="evidence" value="ECO:0000250"/>
    <property type="project" value="UniProtKB"/>
</dbReference>
<dbReference type="GO" id="GO:0061630">
    <property type="term" value="F:ubiquitin protein ligase activity"/>
    <property type="evidence" value="ECO:0007669"/>
    <property type="project" value="InterPro"/>
</dbReference>
<dbReference type="GO" id="GO:0004842">
    <property type="term" value="F:ubiquitin-protein transferase activity"/>
    <property type="evidence" value="ECO:0000250"/>
    <property type="project" value="UniProtKB"/>
</dbReference>
<dbReference type="GO" id="GO:0008270">
    <property type="term" value="F:zinc ion binding"/>
    <property type="evidence" value="ECO:0007669"/>
    <property type="project" value="UniProtKB-KW"/>
</dbReference>
<dbReference type="GO" id="GO:0071333">
    <property type="term" value="P:cellular response to glucose stimulus"/>
    <property type="evidence" value="ECO:0000270"/>
    <property type="project" value="RGD"/>
</dbReference>
<dbReference type="GO" id="GO:0070301">
    <property type="term" value="P:cellular response to hydrogen peroxide"/>
    <property type="evidence" value="ECO:0000315"/>
    <property type="project" value="RGD"/>
</dbReference>
<dbReference type="GO" id="GO:0071456">
    <property type="term" value="P:cellular response to hypoxia"/>
    <property type="evidence" value="ECO:0000270"/>
    <property type="project" value="RGD"/>
</dbReference>
<dbReference type="GO" id="GO:1900408">
    <property type="term" value="P:negative regulation of cellular response to oxidative stress"/>
    <property type="evidence" value="ECO:0000315"/>
    <property type="project" value="RGD"/>
</dbReference>
<dbReference type="GO" id="GO:0090263">
    <property type="term" value="P:positive regulation of canonical Wnt signaling pathway"/>
    <property type="evidence" value="ECO:0000250"/>
    <property type="project" value="UniProtKB"/>
</dbReference>
<dbReference type="GO" id="GO:0051865">
    <property type="term" value="P:protein autoubiquitination"/>
    <property type="evidence" value="ECO:0000250"/>
    <property type="project" value="UniProtKB"/>
</dbReference>
<dbReference type="GO" id="GO:0070936">
    <property type="term" value="P:protein K48-linked ubiquitination"/>
    <property type="evidence" value="ECO:0000250"/>
    <property type="project" value="UniProtKB"/>
</dbReference>
<dbReference type="GO" id="GO:0006511">
    <property type="term" value="P:ubiquitin-dependent protein catabolic process"/>
    <property type="evidence" value="ECO:0000250"/>
    <property type="project" value="UniProtKB"/>
</dbReference>
<dbReference type="GO" id="GO:0016055">
    <property type="term" value="P:Wnt signaling pathway"/>
    <property type="evidence" value="ECO:0007669"/>
    <property type="project" value="UniProtKB-KW"/>
</dbReference>
<dbReference type="CDD" id="cd16546">
    <property type="entry name" value="RING-HC_RNF146"/>
    <property type="match status" value="1"/>
</dbReference>
<dbReference type="FunFam" id="3.30.40.10:FF:000204">
    <property type="entry name" value="E3 ubiquitin-protein ligase RNF146"/>
    <property type="match status" value="1"/>
</dbReference>
<dbReference type="FunFam" id="3.30.720.50:FF:000003">
    <property type="entry name" value="E3 ubiquitin-protein ligase RNF146"/>
    <property type="match status" value="1"/>
</dbReference>
<dbReference type="Gene3D" id="3.30.720.50">
    <property type="match status" value="1"/>
</dbReference>
<dbReference type="Gene3D" id="3.30.40.10">
    <property type="entry name" value="Zinc/RING finger domain, C3HC4 (zinc finger)"/>
    <property type="match status" value="1"/>
</dbReference>
<dbReference type="InterPro" id="IPR044110">
    <property type="entry name" value="RING-HC_RNF146"/>
</dbReference>
<dbReference type="InterPro" id="IPR033509">
    <property type="entry name" value="RNF146"/>
</dbReference>
<dbReference type="InterPro" id="IPR018123">
    <property type="entry name" value="WWE-dom_subgr"/>
</dbReference>
<dbReference type="InterPro" id="IPR004170">
    <property type="entry name" value="WWE_dom"/>
</dbReference>
<dbReference type="InterPro" id="IPR037197">
    <property type="entry name" value="WWE_dom_sf"/>
</dbReference>
<dbReference type="InterPro" id="IPR001841">
    <property type="entry name" value="Znf_RING"/>
</dbReference>
<dbReference type="InterPro" id="IPR013083">
    <property type="entry name" value="Znf_RING/FYVE/PHD"/>
</dbReference>
<dbReference type="InterPro" id="IPR017907">
    <property type="entry name" value="Znf_RING_CS"/>
</dbReference>
<dbReference type="PANTHER" id="PTHR13417">
    <property type="entry name" value="E3 UBIQUITIN-PROTEIN LIGASE RNF146"/>
    <property type="match status" value="1"/>
</dbReference>
<dbReference type="PANTHER" id="PTHR13417:SF2">
    <property type="entry name" value="E3 UBIQUITIN-PROTEIN LIGASE RNF146"/>
    <property type="match status" value="1"/>
</dbReference>
<dbReference type="Pfam" id="PF02825">
    <property type="entry name" value="WWE"/>
    <property type="match status" value="1"/>
</dbReference>
<dbReference type="Pfam" id="PF13920">
    <property type="entry name" value="zf-C3HC4_3"/>
    <property type="match status" value="1"/>
</dbReference>
<dbReference type="SMART" id="SM00184">
    <property type="entry name" value="RING"/>
    <property type="match status" value="1"/>
</dbReference>
<dbReference type="SMART" id="SM00678">
    <property type="entry name" value="WWE"/>
    <property type="match status" value="1"/>
</dbReference>
<dbReference type="SUPFAM" id="SSF57850">
    <property type="entry name" value="RING/U-box"/>
    <property type="match status" value="1"/>
</dbReference>
<dbReference type="SUPFAM" id="SSF117839">
    <property type="entry name" value="WWE domain"/>
    <property type="match status" value="1"/>
</dbReference>
<dbReference type="PROSITE" id="PS50918">
    <property type="entry name" value="WWE"/>
    <property type="match status" value="1"/>
</dbReference>
<dbReference type="PROSITE" id="PS00518">
    <property type="entry name" value="ZF_RING_1"/>
    <property type="match status" value="1"/>
</dbReference>
<dbReference type="PROSITE" id="PS50089">
    <property type="entry name" value="ZF_RING_2"/>
    <property type="match status" value="1"/>
</dbReference>
<evidence type="ECO:0000250" key="1"/>
<evidence type="ECO:0000250" key="2">
    <source>
        <dbReference type="UniProtKB" id="Q9CZW6"/>
    </source>
</evidence>
<evidence type="ECO:0000250" key="3">
    <source>
        <dbReference type="UniProtKB" id="Q9NTX7"/>
    </source>
</evidence>
<evidence type="ECO:0000255" key="4">
    <source>
        <dbReference type="PROSITE-ProRule" id="PRU00175"/>
    </source>
</evidence>
<evidence type="ECO:0000255" key="5">
    <source>
        <dbReference type="PROSITE-ProRule" id="PRU00248"/>
    </source>
</evidence>
<evidence type="ECO:0000256" key="6">
    <source>
        <dbReference type="SAM" id="MobiDB-lite"/>
    </source>
</evidence>
<evidence type="ECO:0000305" key="7"/>
<evidence type="ECO:0007744" key="8">
    <source>
    </source>
</evidence>
<comment type="function">
    <text evidence="2 3">E3 ubiquitin-protein ligase that specifically binds poly-ADP-ribosylated (PARsylated) proteins and mediates their ubiquitination and subsequent degradation. May regulate many important biological processes, such as cell survival and DNA damage response. Acts as an activator of the Wnt signaling pathway by mediating the ubiquitination of PARsylated AXIN1 and AXIN2, 2 key components of the beta-catenin destruction complex. Acts in cooperation with tankyrase proteins (TNKS and TNKS2), which mediate PARsylation of target proteins AXIN1, AXIN2, BLZF1, CASC3, TNKS and TNKS2. Recognizes and binds tankyrase-dependent PARsylated proteins via its WWE domain and mediates their ubiquitination, leading to their degradation. Different ubiquitin linkage types have been observed: TNKS2 undergoes ubiquitination at 'Lys-48' and 'Lys-63', while AXIN1 is only ubiquitinated at 'Lys-48'. May regulate TNKS and TNKS2 subcellular location, preventing aggregation at a centrosomal location. Neuroprotective protein (By similarity). Protects the brain against N-methyl-D-aspartate (NMDA) receptor-mediated glutamate excitotoxicity and ischemia, by interfering with PAR-induced cell death, called parthanatos (By similarity). Prevents nuclear translocation of AIFM1 in a PAR-binding dependent manner (By similarity). Does not affect PARP1 activation. Protects against cell death induced by DNA damaging agents, such as N-methyl-N-nitro-N-nitrosoguanidine (MNNG) and rescues cells from G1 arrest (By similarity). Promotes cell survival after gamma-irradiation. Facilitates DNA repair (By similarity).</text>
</comment>
<comment type="catalytic activity">
    <reaction>
        <text>S-ubiquitinyl-[E2 ubiquitin-conjugating enzyme]-L-cysteine + [acceptor protein]-L-lysine = [E2 ubiquitin-conjugating enzyme]-L-cysteine + N(6)-ubiquitinyl-[acceptor protein]-L-lysine.</text>
        <dbReference type="EC" id="2.3.2.27"/>
    </reaction>
</comment>
<comment type="pathway">
    <text>Protein modification; protein ubiquitination.</text>
</comment>
<comment type="subunit">
    <text evidence="1">Can form homooligomers. Interacts with PARsylated AXIN1, AXIN2, BLZF1, CASC3, H1-2, IPO7, LIG3, NCL, PARP1, XRCC1, XRCC5 and XRCC6. Interacts with DDB1, DHX15, IQGAP1, LRPPRC, PARP2, PRKDC, RUVBL2, TNKS1 and TNKS2. Binding often leads to interactor ubiquitination, in the presence of the appropriate E1 and E2 enzymes, and proteasomal degradation (By similarity).</text>
</comment>
<comment type="subcellular location">
    <subcellularLocation>
        <location evidence="1">Cytoplasm</location>
        <location evidence="1">Cytosol</location>
    </subcellularLocation>
    <subcellularLocation>
        <location evidence="1">Nucleus</location>
    </subcellularLocation>
    <text evidence="1">Translocates to the nucleus after DNA damage, such as laser-induced DNA breaks, and concentrates at DNA breaks. This translocation requires PARP1 activation and PAR-binding (By similarity).</text>
</comment>
<comment type="domain">
    <text evidence="1">The WWE domain mediates non-covalent poly(ADP-ribose)-binding.</text>
</comment>
<comment type="PTM">
    <text evidence="1">Ubiquitinated; autoubiquitinated. Autoubiquitination is enhanced upon poly(ADP-ribose)-binding (By similarity).</text>
</comment>
<proteinExistence type="evidence at protein level"/>
<reference key="1">
    <citation type="journal article" date="2004" name="Genome Res.">
        <title>The status, quality, and expansion of the NIH full-length cDNA project: the Mammalian Gene Collection (MGC).</title>
        <authorList>
            <consortium name="The MGC Project Team"/>
        </authorList>
    </citation>
    <scope>NUCLEOTIDE SEQUENCE [LARGE SCALE MRNA]</scope>
    <source>
        <tissue>Testis</tissue>
    </source>
</reference>
<reference key="2">
    <citation type="journal article" date="2012" name="Nat. Commun.">
        <title>Quantitative maps of protein phosphorylation sites across 14 different rat organs and tissues.</title>
        <authorList>
            <person name="Lundby A."/>
            <person name="Secher A."/>
            <person name="Lage K."/>
            <person name="Nordsborg N.B."/>
            <person name="Dmytriyev A."/>
            <person name="Lundby C."/>
            <person name="Olsen J.V."/>
        </authorList>
    </citation>
    <scope>PHOSPHORYLATION [LARGE SCALE ANALYSIS] AT SER-288 AND SER-292</scope>
    <scope>IDENTIFICATION BY MASS SPECTROMETRY [LARGE SCALE ANALYSIS]</scope>
</reference>
<protein>
    <recommendedName>
        <fullName>E3 ubiquitin-protein ligase RNF146</fullName>
        <ecNumber>2.3.2.27</ecNumber>
    </recommendedName>
    <alternativeName>
        <fullName>Iduna</fullName>
    </alternativeName>
    <alternativeName>
        <fullName>RING finger protein 146</fullName>
    </alternativeName>
    <alternativeName>
        <fullName evidence="7">RING-type E3 ubiquitin transferase RNF146</fullName>
    </alternativeName>
</protein>
<accession>Q5XIK5</accession>
<keyword id="KW-0963">Cytoplasm</keyword>
<keyword id="KW-1017">Isopeptide bond</keyword>
<keyword id="KW-0479">Metal-binding</keyword>
<keyword id="KW-0539">Nucleus</keyword>
<keyword id="KW-0597">Phosphoprotein</keyword>
<keyword id="KW-1185">Reference proteome</keyword>
<keyword id="KW-0808">Transferase</keyword>
<keyword id="KW-0832">Ubl conjugation</keyword>
<keyword id="KW-0833">Ubl conjugation pathway</keyword>
<keyword id="KW-0879">Wnt signaling pathway</keyword>
<keyword id="KW-0862">Zinc</keyword>
<keyword id="KW-0863">Zinc-finger</keyword>
<organism>
    <name type="scientific">Rattus norvegicus</name>
    <name type="common">Rat</name>
    <dbReference type="NCBI Taxonomy" id="10116"/>
    <lineage>
        <taxon>Eukaryota</taxon>
        <taxon>Metazoa</taxon>
        <taxon>Chordata</taxon>
        <taxon>Craniata</taxon>
        <taxon>Vertebrata</taxon>
        <taxon>Euteleostomi</taxon>
        <taxon>Mammalia</taxon>
        <taxon>Eutheria</taxon>
        <taxon>Euarchontoglires</taxon>
        <taxon>Glires</taxon>
        <taxon>Rodentia</taxon>
        <taxon>Myomorpha</taxon>
        <taxon>Muroidea</taxon>
        <taxon>Muridae</taxon>
        <taxon>Murinae</taxon>
        <taxon>Rattus</taxon>
    </lineage>
</organism>
<feature type="chain" id="PRO_0000056110" description="E3 ubiquitin-protein ligase RNF146">
    <location>
        <begin position="1"/>
        <end position="352"/>
    </location>
</feature>
<feature type="domain" description="WWE" evidence="5">
    <location>
        <begin position="91"/>
        <end position="167"/>
    </location>
</feature>
<feature type="zinc finger region" description="RING-type" evidence="4">
    <location>
        <begin position="36"/>
        <end position="74"/>
    </location>
</feature>
<feature type="region of interest" description="Disordered" evidence="6">
    <location>
        <begin position="195"/>
        <end position="242"/>
    </location>
</feature>
<feature type="region of interest" description="Disordered" evidence="6">
    <location>
        <begin position="259"/>
        <end position="293"/>
    </location>
</feature>
<feature type="region of interest" description="Disordered" evidence="6">
    <location>
        <begin position="317"/>
        <end position="352"/>
    </location>
</feature>
<feature type="compositionally biased region" description="Low complexity" evidence="6">
    <location>
        <begin position="197"/>
        <end position="210"/>
    </location>
</feature>
<feature type="compositionally biased region" description="Polar residues" evidence="6">
    <location>
        <begin position="215"/>
        <end position="233"/>
    </location>
</feature>
<feature type="compositionally biased region" description="Acidic residues" evidence="6">
    <location>
        <begin position="282"/>
        <end position="293"/>
    </location>
</feature>
<feature type="binding site" evidence="1">
    <location>
        <position position="107"/>
    </location>
    <ligand>
        <name>a glycoprotein</name>
        <dbReference type="ChEBI" id="CHEBI:17089"/>
    </ligand>
    <ligandPart>
        <name>poly[(1''-&gt;2')-ADP-alpha-D-ribose] group</name>
        <dbReference type="ChEBI" id="CHEBI:157741"/>
    </ligandPart>
</feature>
<feature type="binding site" evidence="1">
    <location>
        <position position="110"/>
    </location>
    <ligand>
        <name>a glycoprotein</name>
        <dbReference type="ChEBI" id="CHEBI:17089"/>
    </ligand>
    <ligandPart>
        <name>poly[(1''-&gt;2')-ADP-alpha-D-ribose] group</name>
        <dbReference type="ChEBI" id="CHEBI:157741"/>
    </ligandPart>
</feature>
<feature type="binding site" evidence="1">
    <location>
        <position position="114"/>
    </location>
    <ligand>
        <name>a glycoprotein</name>
        <dbReference type="ChEBI" id="CHEBI:17089"/>
    </ligand>
    <ligandPart>
        <name>poly[(1''-&gt;2')-ADP-alpha-D-ribose] group</name>
        <dbReference type="ChEBI" id="CHEBI:157741"/>
    </ligandPart>
</feature>
<feature type="binding site" evidence="1">
    <location>
        <position position="144"/>
    </location>
    <ligand>
        <name>a glycoprotein</name>
        <dbReference type="ChEBI" id="CHEBI:17089"/>
    </ligand>
    <ligandPart>
        <name>poly[(1''-&gt;2')-ADP-alpha-D-ribose] group</name>
        <dbReference type="ChEBI" id="CHEBI:157741"/>
    </ligandPart>
</feature>
<feature type="binding site" evidence="1">
    <location>
        <position position="153"/>
    </location>
    <ligand>
        <name>a glycoprotein</name>
        <dbReference type="ChEBI" id="CHEBI:17089"/>
    </ligand>
    <ligandPart>
        <name>poly[(1''-&gt;2')-ADP-alpha-D-ribose] group</name>
        <dbReference type="ChEBI" id="CHEBI:157741"/>
    </ligandPart>
</feature>
<feature type="binding site" evidence="1">
    <location>
        <position position="163"/>
    </location>
    <ligand>
        <name>a glycoprotein</name>
        <dbReference type="ChEBI" id="CHEBI:17089"/>
    </ligand>
    <ligandPart>
        <name>poly[(1''-&gt;2')-ADP-alpha-D-ribose] group</name>
        <dbReference type="ChEBI" id="CHEBI:157741"/>
    </ligandPart>
</feature>
<feature type="binding site" evidence="1">
    <location>
        <position position="175"/>
    </location>
    <ligand>
        <name>a glycoprotein</name>
        <dbReference type="ChEBI" id="CHEBI:17089"/>
    </ligand>
    <ligandPart>
        <name>poly[(1''-&gt;2')-ADP-alpha-D-ribose] group</name>
        <dbReference type="ChEBI" id="CHEBI:157741"/>
    </ligandPart>
</feature>
<feature type="modified residue" description="Phosphoserine" evidence="8">
    <location>
        <position position="288"/>
    </location>
</feature>
<feature type="modified residue" description="Phosphoserine" evidence="8">
    <location>
        <position position="292"/>
    </location>
</feature>
<feature type="cross-link" description="Glycyl lysine isopeptide (Lys-Gly) (interchain with G-Cter in ubiquitin)" evidence="3">
    <location>
        <position position="84"/>
    </location>
</feature>
<feature type="cross-link" description="Glycyl lysine isopeptide (Lys-Gly) (interchain with G-Cter in ubiquitin)" evidence="3">
    <location>
        <position position="94"/>
    </location>
</feature>
<feature type="cross-link" description="Glycyl lysine isopeptide (Lys-Gly) (interchain with G-Cter in ubiquitin)" evidence="3">
    <location>
        <position position="130"/>
    </location>
</feature>
<feature type="cross-link" description="Glycyl lysine isopeptide (Lys-Gly) (interchain with G-Cter in ubiquitin)" evidence="3">
    <location>
        <position position="175"/>
    </location>
</feature>
<gene>
    <name type="primary">Rnf146</name>
</gene>